<sequence>MTTILKHLPVGQRIGIAFSGGLDTSAALLWMRQKGAVPYAYTANLGQPDEEDYDAIPRRAMEYGAENARLIDCRKQLVAEGIAAIQCGAFHNTTGGLTYFNTTPLGRAVTGTMLVAAMKEDGVNIWGDGSTYKGNDIERFYRYGLLTNAELQIYKPWLDTDFIDELGGRHEMSEFMIACGFDYKMSVEKAYSTDSNMLGATHEAKDLEYLNSSVKIVNPIMGVKFWDESVKIPAEEVTVRFEQGHPVALNGKTFSDDVEMMLEANRIGGRHGLGMSDQIENRIIEAKSRGIYEAPGMALLHIAYERLLTGIHNEDTIEQYHAHGRQLGRLLYQGRWFDSQALMLRDSLQRWVASQITGEVTLELRRGNDYSILNTVSENLTYKPERLTMEKGDSVFSPDDRIGQLTMRNLDITDTREKLFGYAKTGLLSSSATSGLPQVENMENKGQ</sequence>
<proteinExistence type="inferred from homology"/>
<reference key="1">
    <citation type="journal article" date="2002" name="Nucleic Acids Res.">
        <title>Genome sequence of Shigella flexneri 2a: insights into pathogenicity through comparison with genomes of Escherichia coli K12 and O157.</title>
        <authorList>
            <person name="Jin Q."/>
            <person name="Yuan Z."/>
            <person name="Xu J."/>
            <person name="Wang Y."/>
            <person name="Shen Y."/>
            <person name="Lu W."/>
            <person name="Wang J."/>
            <person name="Liu H."/>
            <person name="Yang J."/>
            <person name="Yang F."/>
            <person name="Zhang X."/>
            <person name="Zhang J."/>
            <person name="Yang G."/>
            <person name="Wu H."/>
            <person name="Qu D."/>
            <person name="Dong J."/>
            <person name="Sun L."/>
            <person name="Xue Y."/>
            <person name="Zhao A."/>
            <person name="Gao Y."/>
            <person name="Zhu J."/>
            <person name="Kan B."/>
            <person name="Ding K."/>
            <person name="Chen S."/>
            <person name="Cheng H."/>
            <person name="Yao Z."/>
            <person name="He B."/>
            <person name="Chen R."/>
            <person name="Ma D."/>
            <person name="Qiang B."/>
            <person name="Wen Y."/>
            <person name="Hou Y."/>
            <person name="Yu J."/>
        </authorList>
    </citation>
    <scope>NUCLEOTIDE SEQUENCE [LARGE SCALE GENOMIC DNA]</scope>
    <source>
        <strain>301 / Serotype 2a</strain>
    </source>
</reference>
<reference key="2">
    <citation type="journal article" date="2003" name="Infect. Immun.">
        <title>Complete genome sequence and comparative genomics of Shigella flexneri serotype 2a strain 2457T.</title>
        <authorList>
            <person name="Wei J."/>
            <person name="Goldberg M.B."/>
            <person name="Burland V."/>
            <person name="Venkatesan M.M."/>
            <person name="Deng W."/>
            <person name="Fournier G."/>
            <person name="Mayhew G.F."/>
            <person name="Plunkett G. III"/>
            <person name="Rose D.J."/>
            <person name="Darling A."/>
            <person name="Mau B."/>
            <person name="Perna N.T."/>
            <person name="Payne S.M."/>
            <person name="Runyen-Janecky L.J."/>
            <person name="Zhou S."/>
            <person name="Schwartz D.C."/>
            <person name="Blattner F.R."/>
        </authorList>
    </citation>
    <scope>NUCLEOTIDE SEQUENCE [LARGE SCALE GENOMIC DNA]</scope>
    <source>
        <strain>ATCC 700930 / 2457T / Serotype 2a</strain>
    </source>
</reference>
<gene>
    <name type="primary">argG</name>
    <name type="ordered locus">SF3213</name>
    <name type="ordered locus">S3430</name>
</gene>
<feature type="initiator methionine" description="Removed" evidence="1">
    <location>
        <position position="1"/>
    </location>
</feature>
<feature type="chain" id="PRO_0000148707" description="Argininosuccinate synthase">
    <location>
        <begin position="2"/>
        <end position="447"/>
    </location>
</feature>
<feature type="binding site" evidence="1">
    <location>
        <begin position="17"/>
        <end position="25"/>
    </location>
    <ligand>
        <name>ATP</name>
        <dbReference type="ChEBI" id="CHEBI:30616"/>
    </ligand>
</feature>
<feature type="binding site" evidence="1">
    <location>
        <position position="43"/>
    </location>
    <ligand>
        <name>ATP</name>
        <dbReference type="ChEBI" id="CHEBI:30616"/>
    </ligand>
</feature>
<feature type="binding site" evidence="1">
    <location>
        <position position="99"/>
    </location>
    <ligand>
        <name>L-citrulline</name>
        <dbReference type="ChEBI" id="CHEBI:57743"/>
    </ligand>
</feature>
<feature type="binding site" evidence="1">
    <location>
        <position position="129"/>
    </location>
    <ligand>
        <name>ATP</name>
        <dbReference type="ChEBI" id="CHEBI:30616"/>
    </ligand>
</feature>
<feature type="binding site" evidence="1">
    <location>
        <position position="131"/>
    </location>
    <ligand>
        <name>ATP</name>
        <dbReference type="ChEBI" id="CHEBI:30616"/>
    </ligand>
</feature>
<feature type="binding site" evidence="1">
    <location>
        <position position="131"/>
    </location>
    <ligand>
        <name>L-aspartate</name>
        <dbReference type="ChEBI" id="CHEBI:29991"/>
    </ligand>
</feature>
<feature type="binding site" evidence="1">
    <location>
        <position position="135"/>
    </location>
    <ligand>
        <name>L-aspartate</name>
        <dbReference type="ChEBI" id="CHEBI:29991"/>
    </ligand>
</feature>
<feature type="binding site" evidence="1">
    <location>
        <position position="135"/>
    </location>
    <ligand>
        <name>L-citrulline</name>
        <dbReference type="ChEBI" id="CHEBI:57743"/>
    </ligand>
</feature>
<feature type="binding site" evidence="1">
    <location>
        <position position="136"/>
    </location>
    <ligand>
        <name>ATP</name>
        <dbReference type="ChEBI" id="CHEBI:30616"/>
    </ligand>
</feature>
<feature type="binding site" evidence="1">
    <location>
        <position position="136"/>
    </location>
    <ligand>
        <name>L-aspartate</name>
        <dbReference type="ChEBI" id="CHEBI:29991"/>
    </ligand>
</feature>
<feature type="binding site" evidence="1">
    <location>
        <position position="139"/>
    </location>
    <ligand>
        <name>L-citrulline</name>
        <dbReference type="ChEBI" id="CHEBI:57743"/>
    </ligand>
</feature>
<feature type="binding site" evidence="1">
    <location>
        <position position="192"/>
    </location>
    <ligand>
        <name>L-citrulline</name>
        <dbReference type="ChEBI" id="CHEBI:57743"/>
    </ligand>
</feature>
<feature type="binding site" evidence="1">
    <location>
        <position position="194"/>
    </location>
    <ligand>
        <name>ATP</name>
        <dbReference type="ChEBI" id="CHEBI:30616"/>
    </ligand>
</feature>
<feature type="binding site" evidence="1">
    <location>
        <position position="201"/>
    </location>
    <ligand>
        <name>L-citrulline</name>
        <dbReference type="ChEBI" id="CHEBI:57743"/>
    </ligand>
</feature>
<feature type="binding site" evidence="1">
    <location>
        <position position="203"/>
    </location>
    <ligand>
        <name>L-citrulline</name>
        <dbReference type="ChEBI" id="CHEBI:57743"/>
    </ligand>
</feature>
<feature type="binding site" evidence="1">
    <location>
        <position position="280"/>
    </location>
    <ligand>
        <name>L-citrulline</name>
        <dbReference type="ChEBI" id="CHEBI:57743"/>
    </ligand>
</feature>
<accession>P59609</accession>
<dbReference type="EC" id="6.3.4.5"/>
<dbReference type="EMBL" id="AE005674">
    <property type="protein sequence ID" value="AAN44680.1"/>
    <property type="molecule type" value="Genomic_DNA"/>
</dbReference>
<dbReference type="EMBL" id="AE014073">
    <property type="protein sequence ID" value="AAP18493.1"/>
    <property type="molecule type" value="Genomic_DNA"/>
</dbReference>
<dbReference type="RefSeq" id="NP_708973.1">
    <property type="nucleotide sequence ID" value="NC_004337.2"/>
</dbReference>
<dbReference type="RefSeq" id="WP_000207682.1">
    <property type="nucleotide sequence ID" value="NZ_WPGW01000004.1"/>
</dbReference>
<dbReference type="SMR" id="P59609"/>
<dbReference type="STRING" id="198214.SF3213"/>
<dbReference type="PaxDb" id="198214-SF3213"/>
<dbReference type="GeneID" id="1027111"/>
<dbReference type="KEGG" id="sfl:SF3213"/>
<dbReference type="KEGG" id="sfx:S3430"/>
<dbReference type="PATRIC" id="fig|198214.7.peg.3812"/>
<dbReference type="HOGENOM" id="CLU_032784_4_1_6"/>
<dbReference type="UniPathway" id="UPA00068">
    <property type="reaction ID" value="UER00113"/>
</dbReference>
<dbReference type="Proteomes" id="UP000001006">
    <property type="component" value="Chromosome"/>
</dbReference>
<dbReference type="Proteomes" id="UP000002673">
    <property type="component" value="Chromosome"/>
</dbReference>
<dbReference type="GO" id="GO:0005737">
    <property type="term" value="C:cytoplasm"/>
    <property type="evidence" value="ECO:0007669"/>
    <property type="project" value="UniProtKB-SubCell"/>
</dbReference>
<dbReference type="GO" id="GO:0004055">
    <property type="term" value="F:argininosuccinate synthase activity"/>
    <property type="evidence" value="ECO:0007669"/>
    <property type="project" value="UniProtKB-UniRule"/>
</dbReference>
<dbReference type="GO" id="GO:0005524">
    <property type="term" value="F:ATP binding"/>
    <property type="evidence" value="ECO:0007669"/>
    <property type="project" value="UniProtKB-UniRule"/>
</dbReference>
<dbReference type="GO" id="GO:0042803">
    <property type="term" value="F:protein homodimerization activity"/>
    <property type="evidence" value="ECO:0007669"/>
    <property type="project" value="InterPro"/>
</dbReference>
<dbReference type="GO" id="GO:0000053">
    <property type="term" value="P:argininosuccinate metabolic process"/>
    <property type="evidence" value="ECO:0007669"/>
    <property type="project" value="TreeGrafter"/>
</dbReference>
<dbReference type="GO" id="GO:0006526">
    <property type="term" value="P:L-arginine biosynthetic process"/>
    <property type="evidence" value="ECO:0007669"/>
    <property type="project" value="UniProtKB-UniRule"/>
</dbReference>
<dbReference type="GO" id="GO:0000050">
    <property type="term" value="P:urea cycle"/>
    <property type="evidence" value="ECO:0007669"/>
    <property type="project" value="TreeGrafter"/>
</dbReference>
<dbReference type="CDD" id="cd01999">
    <property type="entry name" value="ASS"/>
    <property type="match status" value="1"/>
</dbReference>
<dbReference type="FunFam" id="1.10.287.400:FF:000001">
    <property type="entry name" value="Argininosuccinate synthase"/>
    <property type="match status" value="1"/>
</dbReference>
<dbReference type="Gene3D" id="1.10.287.400">
    <property type="match status" value="1"/>
</dbReference>
<dbReference type="Gene3D" id="3.90.1260.10">
    <property type="entry name" value="Argininosuccinate synthetase, chain A, domain 2"/>
    <property type="match status" value="1"/>
</dbReference>
<dbReference type="Gene3D" id="3.40.50.620">
    <property type="entry name" value="HUPs"/>
    <property type="match status" value="1"/>
</dbReference>
<dbReference type="HAMAP" id="MF_00581">
    <property type="entry name" value="Arg_succ_synth_type2"/>
    <property type="match status" value="1"/>
</dbReference>
<dbReference type="InterPro" id="IPR023437">
    <property type="entry name" value="Arg_succ_synth_type2_subfam"/>
</dbReference>
<dbReference type="InterPro" id="IPR048268">
    <property type="entry name" value="Arginosuc_syn_C"/>
</dbReference>
<dbReference type="InterPro" id="IPR048267">
    <property type="entry name" value="Arginosuc_syn_N"/>
</dbReference>
<dbReference type="InterPro" id="IPR001518">
    <property type="entry name" value="Arginosuc_synth"/>
</dbReference>
<dbReference type="InterPro" id="IPR018223">
    <property type="entry name" value="Arginosuc_synth_CS"/>
</dbReference>
<dbReference type="InterPro" id="IPR023434">
    <property type="entry name" value="Arginosuc_synth_type_1_subfam"/>
</dbReference>
<dbReference type="InterPro" id="IPR024074">
    <property type="entry name" value="AS_cat/multimer_dom_body"/>
</dbReference>
<dbReference type="InterPro" id="IPR024073">
    <property type="entry name" value="AS_multimer_C_tail"/>
</dbReference>
<dbReference type="InterPro" id="IPR014729">
    <property type="entry name" value="Rossmann-like_a/b/a_fold"/>
</dbReference>
<dbReference type="NCBIfam" id="TIGR00032">
    <property type="entry name" value="argG"/>
    <property type="match status" value="1"/>
</dbReference>
<dbReference type="NCBIfam" id="NF003779">
    <property type="entry name" value="PRK05370.1"/>
    <property type="match status" value="1"/>
</dbReference>
<dbReference type="PANTHER" id="PTHR11587">
    <property type="entry name" value="ARGININOSUCCINATE SYNTHASE"/>
    <property type="match status" value="1"/>
</dbReference>
<dbReference type="PANTHER" id="PTHR11587:SF2">
    <property type="entry name" value="ARGININOSUCCINATE SYNTHASE"/>
    <property type="match status" value="1"/>
</dbReference>
<dbReference type="Pfam" id="PF20979">
    <property type="entry name" value="Arginosuc_syn_C"/>
    <property type="match status" value="1"/>
</dbReference>
<dbReference type="Pfam" id="PF00764">
    <property type="entry name" value="Arginosuc_synth"/>
    <property type="match status" value="1"/>
</dbReference>
<dbReference type="SUPFAM" id="SSF52402">
    <property type="entry name" value="Adenine nucleotide alpha hydrolases-like"/>
    <property type="match status" value="1"/>
</dbReference>
<dbReference type="SUPFAM" id="SSF69864">
    <property type="entry name" value="Argininosuccinate synthetase, C-terminal domain"/>
    <property type="match status" value="1"/>
</dbReference>
<dbReference type="PROSITE" id="PS00564">
    <property type="entry name" value="ARGININOSUCCIN_SYN_1"/>
    <property type="match status" value="1"/>
</dbReference>
<dbReference type="PROSITE" id="PS00565">
    <property type="entry name" value="ARGININOSUCCIN_SYN_2"/>
    <property type="match status" value="1"/>
</dbReference>
<evidence type="ECO:0000250" key="1"/>
<evidence type="ECO:0000305" key="2"/>
<protein>
    <recommendedName>
        <fullName>Argininosuccinate synthase</fullName>
        <ecNumber>6.3.4.5</ecNumber>
    </recommendedName>
    <alternativeName>
        <fullName>Citrulline--aspartate ligase</fullName>
    </alternativeName>
</protein>
<comment type="catalytic activity">
    <reaction>
        <text>L-citrulline + L-aspartate + ATP = 2-(N(omega)-L-arginino)succinate + AMP + diphosphate + H(+)</text>
        <dbReference type="Rhea" id="RHEA:10932"/>
        <dbReference type="ChEBI" id="CHEBI:15378"/>
        <dbReference type="ChEBI" id="CHEBI:29991"/>
        <dbReference type="ChEBI" id="CHEBI:30616"/>
        <dbReference type="ChEBI" id="CHEBI:33019"/>
        <dbReference type="ChEBI" id="CHEBI:57472"/>
        <dbReference type="ChEBI" id="CHEBI:57743"/>
        <dbReference type="ChEBI" id="CHEBI:456215"/>
        <dbReference type="EC" id="6.3.4.5"/>
    </reaction>
</comment>
<comment type="pathway">
    <text>Amino-acid biosynthesis; L-arginine biosynthesis; L-arginine from L-ornithine and carbamoyl phosphate: step 2/3.</text>
</comment>
<comment type="subunit">
    <text evidence="1">Homotetramer.</text>
</comment>
<comment type="subcellular location">
    <subcellularLocation>
        <location evidence="1">Cytoplasm</location>
    </subcellularLocation>
</comment>
<comment type="similarity">
    <text evidence="2">Belongs to the argininosuccinate synthase family. Type 2 subfamily.</text>
</comment>
<keyword id="KW-0028">Amino-acid biosynthesis</keyword>
<keyword id="KW-0055">Arginine biosynthesis</keyword>
<keyword id="KW-0067">ATP-binding</keyword>
<keyword id="KW-0963">Cytoplasm</keyword>
<keyword id="KW-0436">Ligase</keyword>
<keyword id="KW-0547">Nucleotide-binding</keyword>
<keyword id="KW-1185">Reference proteome</keyword>
<organism>
    <name type="scientific">Shigella flexneri</name>
    <dbReference type="NCBI Taxonomy" id="623"/>
    <lineage>
        <taxon>Bacteria</taxon>
        <taxon>Pseudomonadati</taxon>
        <taxon>Pseudomonadota</taxon>
        <taxon>Gammaproteobacteria</taxon>
        <taxon>Enterobacterales</taxon>
        <taxon>Enterobacteriaceae</taxon>
        <taxon>Shigella</taxon>
    </lineage>
</organism>
<name>ASSY_SHIFL</name>